<reference key="1">
    <citation type="journal article" date="2007" name="PLoS ONE">
        <title>Molecular correlates of host specialization in Staphylococcus aureus.</title>
        <authorList>
            <person name="Herron-Olson L."/>
            <person name="Fitzgerald J.R."/>
            <person name="Musser J.M."/>
            <person name="Kapur V."/>
        </authorList>
    </citation>
    <scope>NUCLEOTIDE SEQUENCE [LARGE SCALE GENOMIC DNA]</scope>
    <source>
        <strain>bovine RF122 / ET3-1</strain>
    </source>
</reference>
<gene>
    <name evidence="1" type="primary">rpmG1</name>
    <name type="ordered locus">SAB0485</name>
</gene>
<evidence type="ECO:0000255" key="1">
    <source>
        <dbReference type="HAMAP-Rule" id="MF_00294"/>
    </source>
</evidence>
<sequence>MRKIPLNCEACGNRNYNVPKQEGSATRLTLKKYCPKCNAHTIHKESK</sequence>
<proteinExistence type="inferred from homology"/>
<feature type="chain" id="PRO_0000356678" description="Large ribosomal subunit protein bL33A">
    <location>
        <begin position="1"/>
        <end position="47"/>
    </location>
</feature>
<dbReference type="EMBL" id="AJ938182">
    <property type="protein sequence ID" value="CAI80173.1"/>
    <property type="molecule type" value="Genomic_DNA"/>
</dbReference>
<dbReference type="SMR" id="Q2YSC7"/>
<dbReference type="KEGG" id="sab:SAB0485"/>
<dbReference type="HOGENOM" id="CLU_190949_0_1_9"/>
<dbReference type="GO" id="GO:0005737">
    <property type="term" value="C:cytoplasm"/>
    <property type="evidence" value="ECO:0007669"/>
    <property type="project" value="UniProtKB-ARBA"/>
</dbReference>
<dbReference type="GO" id="GO:1990904">
    <property type="term" value="C:ribonucleoprotein complex"/>
    <property type="evidence" value="ECO:0007669"/>
    <property type="project" value="UniProtKB-KW"/>
</dbReference>
<dbReference type="GO" id="GO:0005840">
    <property type="term" value="C:ribosome"/>
    <property type="evidence" value="ECO:0007669"/>
    <property type="project" value="UniProtKB-KW"/>
</dbReference>
<dbReference type="GO" id="GO:0003735">
    <property type="term" value="F:structural constituent of ribosome"/>
    <property type="evidence" value="ECO:0007669"/>
    <property type="project" value="InterPro"/>
</dbReference>
<dbReference type="GO" id="GO:0006412">
    <property type="term" value="P:translation"/>
    <property type="evidence" value="ECO:0007669"/>
    <property type="project" value="UniProtKB-UniRule"/>
</dbReference>
<dbReference type="Gene3D" id="2.20.28.120">
    <property type="entry name" value="Ribosomal protein L33"/>
    <property type="match status" value="1"/>
</dbReference>
<dbReference type="HAMAP" id="MF_00294">
    <property type="entry name" value="Ribosomal_bL33"/>
    <property type="match status" value="1"/>
</dbReference>
<dbReference type="InterPro" id="IPR001705">
    <property type="entry name" value="Ribosomal_bL33"/>
</dbReference>
<dbReference type="InterPro" id="IPR018264">
    <property type="entry name" value="Ribosomal_bL33_CS"/>
</dbReference>
<dbReference type="InterPro" id="IPR038584">
    <property type="entry name" value="Ribosomal_bL33_sf"/>
</dbReference>
<dbReference type="InterPro" id="IPR011332">
    <property type="entry name" value="Ribosomal_zn-bd"/>
</dbReference>
<dbReference type="NCBIfam" id="NF001764">
    <property type="entry name" value="PRK00504.1"/>
    <property type="match status" value="1"/>
</dbReference>
<dbReference type="NCBIfam" id="TIGR01023">
    <property type="entry name" value="rpmG_bact"/>
    <property type="match status" value="1"/>
</dbReference>
<dbReference type="Pfam" id="PF00471">
    <property type="entry name" value="Ribosomal_L33"/>
    <property type="match status" value="1"/>
</dbReference>
<dbReference type="SUPFAM" id="SSF57829">
    <property type="entry name" value="Zn-binding ribosomal proteins"/>
    <property type="match status" value="1"/>
</dbReference>
<dbReference type="PROSITE" id="PS00582">
    <property type="entry name" value="RIBOSOMAL_L33"/>
    <property type="match status" value="1"/>
</dbReference>
<comment type="similarity">
    <text evidence="1">Belongs to the bacterial ribosomal protein bL33 family.</text>
</comment>
<protein>
    <recommendedName>
        <fullName evidence="1">Large ribosomal subunit protein bL33A</fullName>
    </recommendedName>
    <alternativeName>
        <fullName evidence="1">50S ribosomal protein L33 1</fullName>
    </alternativeName>
</protein>
<name>RL331_STAAB</name>
<keyword id="KW-0687">Ribonucleoprotein</keyword>
<keyword id="KW-0689">Ribosomal protein</keyword>
<organism>
    <name type="scientific">Staphylococcus aureus (strain bovine RF122 / ET3-1)</name>
    <dbReference type="NCBI Taxonomy" id="273036"/>
    <lineage>
        <taxon>Bacteria</taxon>
        <taxon>Bacillati</taxon>
        <taxon>Bacillota</taxon>
        <taxon>Bacilli</taxon>
        <taxon>Bacillales</taxon>
        <taxon>Staphylococcaceae</taxon>
        <taxon>Staphylococcus</taxon>
    </lineage>
</organism>
<accession>Q2YSC7</accession>